<feature type="chain" id="PRO_0000122137" description="Serine--tRNA ligase">
    <location>
        <begin position="1"/>
        <end position="425"/>
    </location>
</feature>
<feature type="binding site" evidence="1">
    <location>
        <begin position="230"/>
        <end position="232"/>
    </location>
    <ligand>
        <name>L-serine</name>
        <dbReference type="ChEBI" id="CHEBI:33384"/>
    </ligand>
</feature>
<feature type="binding site" evidence="1">
    <location>
        <begin position="261"/>
        <end position="263"/>
    </location>
    <ligand>
        <name>ATP</name>
        <dbReference type="ChEBI" id="CHEBI:30616"/>
    </ligand>
</feature>
<feature type="binding site" evidence="1">
    <location>
        <position position="284"/>
    </location>
    <ligand>
        <name>L-serine</name>
        <dbReference type="ChEBI" id="CHEBI:33384"/>
    </ligand>
</feature>
<feature type="binding site" evidence="1">
    <location>
        <begin position="348"/>
        <end position="351"/>
    </location>
    <ligand>
        <name>ATP</name>
        <dbReference type="ChEBI" id="CHEBI:30616"/>
    </ligand>
</feature>
<feature type="binding site" evidence="1">
    <location>
        <position position="384"/>
    </location>
    <ligand>
        <name>L-serine</name>
        <dbReference type="ChEBI" id="CHEBI:33384"/>
    </ligand>
</feature>
<evidence type="ECO:0000255" key="1">
    <source>
        <dbReference type="HAMAP-Rule" id="MF_00176"/>
    </source>
</evidence>
<comment type="function">
    <text evidence="1">Catalyzes the attachment of serine to tRNA(Ser). Is also able to aminoacylate tRNA(Sec) with serine, to form the misacylated tRNA L-seryl-tRNA(Sec), which will be further converted into selenocysteinyl-tRNA(Sec).</text>
</comment>
<comment type="catalytic activity">
    <reaction evidence="1">
        <text>tRNA(Ser) + L-serine + ATP = L-seryl-tRNA(Ser) + AMP + diphosphate + H(+)</text>
        <dbReference type="Rhea" id="RHEA:12292"/>
        <dbReference type="Rhea" id="RHEA-COMP:9669"/>
        <dbReference type="Rhea" id="RHEA-COMP:9703"/>
        <dbReference type="ChEBI" id="CHEBI:15378"/>
        <dbReference type="ChEBI" id="CHEBI:30616"/>
        <dbReference type="ChEBI" id="CHEBI:33019"/>
        <dbReference type="ChEBI" id="CHEBI:33384"/>
        <dbReference type="ChEBI" id="CHEBI:78442"/>
        <dbReference type="ChEBI" id="CHEBI:78533"/>
        <dbReference type="ChEBI" id="CHEBI:456215"/>
        <dbReference type="EC" id="6.1.1.11"/>
    </reaction>
</comment>
<comment type="catalytic activity">
    <reaction evidence="1">
        <text>tRNA(Sec) + L-serine + ATP = L-seryl-tRNA(Sec) + AMP + diphosphate + H(+)</text>
        <dbReference type="Rhea" id="RHEA:42580"/>
        <dbReference type="Rhea" id="RHEA-COMP:9742"/>
        <dbReference type="Rhea" id="RHEA-COMP:10128"/>
        <dbReference type="ChEBI" id="CHEBI:15378"/>
        <dbReference type="ChEBI" id="CHEBI:30616"/>
        <dbReference type="ChEBI" id="CHEBI:33019"/>
        <dbReference type="ChEBI" id="CHEBI:33384"/>
        <dbReference type="ChEBI" id="CHEBI:78442"/>
        <dbReference type="ChEBI" id="CHEBI:78533"/>
        <dbReference type="ChEBI" id="CHEBI:456215"/>
        <dbReference type="EC" id="6.1.1.11"/>
    </reaction>
</comment>
<comment type="pathway">
    <text evidence="1">Aminoacyl-tRNA biosynthesis; selenocysteinyl-tRNA(Sec) biosynthesis; L-seryl-tRNA(Sec) from L-serine and tRNA(Sec): step 1/1.</text>
</comment>
<comment type="subunit">
    <text evidence="1">Homodimer. The tRNA molecule binds across the dimer.</text>
</comment>
<comment type="subcellular location">
    <subcellularLocation>
        <location evidence="1">Cytoplasm</location>
    </subcellularLocation>
</comment>
<comment type="domain">
    <text evidence="1">Consists of two distinct domains, a catalytic core and a N-terminal extension that is involved in tRNA binding.</text>
</comment>
<comment type="similarity">
    <text evidence="1">Belongs to the class-II aminoacyl-tRNA synthetase family. Type-1 seryl-tRNA synthetase subfamily.</text>
</comment>
<reference key="1">
    <citation type="journal article" date="2004" name="J. Infect. Dis.">
        <title>Progress toward characterization of the group A Streptococcus metagenome: complete genome sequence of a macrolide-resistant serotype M6 strain.</title>
        <authorList>
            <person name="Banks D.J."/>
            <person name="Porcella S.F."/>
            <person name="Barbian K.D."/>
            <person name="Beres S.B."/>
            <person name="Philips L.E."/>
            <person name="Voyich J.M."/>
            <person name="DeLeo F.R."/>
            <person name="Martin J.M."/>
            <person name="Somerville G.A."/>
            <person name="Musser J.M."/>
        </authorList>
    </citation>
    <scope>NUCLEOTIDE SEQUENCE [LARGE SCALE GENOMIC DNA]</scope>
    <source>
        <strain>ATCC BAA-946 / MGAS10394</strain>
    </source>
</reference>
<name>SYS_STRP6</name>
<dbReference type="EC" id="6.1.1.11" evidence="1"/>
<dbReference type="EMBL" id="CP000003">
    <property type="protein sequence ID" value="AAT87612.1"/>
    <property type="molecule type" value="Genomic_DNA"/>
</dbReference>
<dbReference type="RefSeq" id="WP_011018153.1">
    <property type="nucleotide sequence ID" value="NC_006086.1"/>
</dbReference>
<dbReference type="SMR" id="Q5XAF1"/>
<dbReference type="KEGG" id="spa:M6_Spy1477"/>
<dbReference type="HOGENOM" id="CLU_023797_1_1_9"/>
<dbReference type="UniPathway" id="UPA00906">
    <property type="reaction ID" value="UER00895"/>
</dbReference>
<dbReference type="Proteomes" id="UP000001167">
    <property type="component" value="Chromosome"/>
</dbReference>
<dbReference type="GO" id="GO:0005737">
    <property type="term" value="C:cytoplasm"/>
    <property type="evidence" value="ECO:0007669"/>
    <property type="project" value="UniProtKB-SubCell"/>
</dbReference>
<dbReference type="GO" id="GO:0005524">
    <property type="term" value="F:ATP binding"/>
    <property type="evidence" value="ECO:0007669"/>
    <property type="project" value="UniProtKB-UniRule"/>
</dbReference>
<dbReference type="GO" id="GO:0140096">
    <property type="term" value="F:catalytic activity, acting on a protein"/>
    <property type="evidence" value="ECO:0007669"/>
    <property type="project" value="UniProtKB-ARBA"/>
</dbReference>
<dbReference type="GO" id="GO:0004828">
    <property type="term" value="F:serine-tRNA ligase activity"/>
    <property type="evidence" value="ECO:0007669"/>
    <property type="project" value="UniProtKB-UniRule"/>
</dbReference>
<dbReference type="GO" id="GO:0016740">
    <property type="term" value="F:transferase activity"/>
    <property type="evidence" value="ECO:0007669"/>
    <property type="project" value="UniProtKB-ARBA"/>
</dbReference>
<dbReference type="GO" id="GO:0016260">
    <property type="term" value="P:selenocysteine biosynthetic process"/>
    <property type="evidence" value="ECO:0007669"/>
    <property type="project" value="UniProtKB-UniRule"/>
</dbReference>
<dbReference type="GO" id="GO:0006434">
    <property type="term" value="P:seryl-tRNA aminoacylation"/>
    <property type="evidence" value="ECO:0007669"/>
    <property type="project" value="UniProtKB-UniRule"/>
</dbReference>
<dbReference type="CDD" id="cd00770">
    <property type="entry name" value="SerRS_core"/>
    <property type="match status" value="1"/>
</dbReference>
<dbReference type="Gene3D" id="3.30.930.10">
    <property type="entry name" value="Bira Bifunctional Protein, Domain 2"/>
    <property type="match status" value="1"/>
</dbReference>
<dbReference type="Gene3D" id="1.10.287.40">
    <property type="entry name" value="Serine-tRNA synthetase, tRNA binding domain"/>
    <property type="match status" value="1"/>
</dbReference>
<dbReference type="HAMAP" id="MF_00176">
    <property type="entry name" value="Ser_tRNA_synth_type1"/>
    <property type="match status" value="1"/>
</dbReference>
<dbReference type="InterPro" id="IPR002314">
    <property type="entry name" value="aa-tRNA-synt_IIb"/>
</dbReference>
<dbReference type="InterPro" id="IPR006195">
    <property type="entry name" value="aa-tRNA-synth_II"/>
</dbReference>
<dbReference type="InterPro" id="IPR045864">
    <property type="entry name" value="aa-tRNA-synth_II/BPL/LPL"/>
</dbReference>
<dbReference type="InterPro" id="IPR002317">
    <property type="entry name" value="Ser-tRNA-ligase_type_1"/>
</dbReference>
<dbReference type="InterPro" id="IPR015866">
    <property type="entry name" value="Ser-tRNA-synth_1_N"/>
</dbReference>
<dbReference type="InterPro" id="IPR042103">
    <property type="entry name" value="SerRS_1_N_sf"/>
</dbReference>
<dbReference type="InterPro" id="IPR033729">
    <property type="entry name" value="SerRS_core"/>
</dbReference>
<dbReference type="InterPro" id="IPR010978">
    <property type="entry name" value="tRNA-bd_arm"/>
</dbReference>
<dbReference type="NCBIfam" id="TIGR00414">
    <property type="entry name" value="serS"/>
    <property type="match status" value="1"/>
</dbReference>
<dbReference type="PANTHER" id="PTHR43697:SF1">
    <property type="entry name" value="SERINE--TRNA LIGASE"/>
    <property type="match status" value="1"/>
</dbReference>
<dbReference type="PANTHER" id="PTHR43697">
    <property type="entry name" value="SERYL-TRNA SYNTHETASE"/>
    <property type="match status" value="1"/>
</dbReference>
<dbReference type="Pfam" id="PF02403">
    <property type="entry name" value="Seryl_tRNA_N"/>
    <property type="match status" value="1"/>
</dbReference>
<dbReference type="Pfam" id="PF00587">
    <property type="entry name" value="tRNA-synt_2b"/>
    <property type="match status" value="1"/>
</dbReference>
<dbReference type="PIRSF" id="PIRSF001529">
    <property type="entry name" value="Ser-tRNA-synth_IIa"/>
    <property type="match status" value="1"/>
</dbReference>
<dbReference type="PRINTS" id="PR00981">
    <property type="entry name" value="TRNASYNTHSER"/>
</dbReference>
<dbReference type="SUPFAM" id="SSF55681">
    <property type="entry name" value="Class II aaRS and biotin synthetases"/>
    <property type="match status" value="1"/>
</dbReference>
<dbReference type="SUPFAM" id="SSF46589">
    <property type="entry name" value="tRNA-binding arm"/>
    <property type="match status" value="1"/>
</dbReference>
<dbReference type="PROSITE" id="PS50862">
    <property type="entry name" value="AA_TRNA_LIGASE_II"/>
    <property type="match status" value="1"/>
</dbReference>
<protein>
    <recommendedName>
        <fullName evidence="1">Serine--tRNA ligase</fullName>
        <ecNumber evidence="1">6.1.1.11</ecNumber>
    </recommendedName>
    <alternativeName>
        <fullName evidence="1">Seryl-tRNA synthetase</fullName>
        <shortName evidence="1">SerRS</shortName>
    </alternativeName>
    <alternativeName>
        <fullName evidence="1">Seryl-tRNA(Ser/Sec) synthetase</fullName>
    </alternativeName>
</protein>
<organism>
    <name type="scientific">Streptococcus pyogenes serotype M6 (strain ATCC BAA-946 / MGAS10394)</name>
    <dbReference type="NCBI Taxonomy" id="286636"/>
    <lineage>
        <taxon>Bacteria</taxon>
        <taxon>Bacillati</taxon>
        <taxon>Bacillota</taxon>
        <taxon>Bacilli</taxon>
        <taxon>Lactobacillales</taxon>
        <taxon>Streptococcaceae</taxon>
        <taxon>Streptococcus</taxon>
    </lineage>
</organism>
<keyword id="KW-0030">Aminoacyl-tRNA synthetase</keyword>
<keyword id="KW-0067">ATP-binding</keyword>
<keyword id="KW-0963">Cytoplasm</keyword>
<keyword id="KW-0436">Ligase</keyword>
<keyword id="KW-0547">Nucleotide-binding</keyword>
<keyword id="KW-0648">Protein biosynthesis</keyword>
<proteinExistence type="inferred from homology"/>
<sequence length="425" mass="48181">MLDLKRIRTDFDTVAAKLKNRGVSEDTLTHLKELDEKRRTLLVQSEELKAERNIASAAIAQAKRQKEDATQQIADMQKVSADIKTIDNQLVAIDQQVADIITVLPNTPHDSVPVGADEEDNVEIRRWGTPRDFDFEVKAHWDLGEDLDILDWERGAKVTGARFLFYKNLGARLERALYNFMLDEHIKEGYQEIITPYMVNHDSMFGTGQYPKFKEDTFELADTNFVLIPTAEVPLTNYYRGEILDGKELPIYFTAMSPSFRSEAGSAGRDTRGLIRLHQFHKVEMVKFAKPEESYQELEKMTANAENILQKLGLPYRVISLCTGDMGFSAAKTYDLEVWIPAQNTYREISSCSNTEDFQARRAQIRYRDEADGKVKLLHTLNGSGLAVGRTVAAILENYQNEDGSVTIPEVLRPYMGGETVISPK</sequence>
<gene>
    <name evidence="1" type="primary">serS</name>
    <name type="ordered locus">M6_Spy1477</name>
</gene>
<accession>Q5XAF1</accession>